<dbReference type="EC" id="6.3.2.9" evidence="1"/>
<dbReference type="EMBL" id="CP000546">
    <property type="protein sequence ID" value="ABN03662.1"/>
    <property type="molecule type" value="Genomic_DNA"/>
</dbReference>
<dbReference type="RefSeq" id="WP_004203798.1">
    <property type="nucleotide sequence ID" value="NC_008836.1"/>
</dbReference>
<dbReference type="SMR" id="A2S5U7"/>
<dbReference type="GeneID" id="93061629"/>
<dbReference type="KEGG" id="bml:BMA10229_A1333"/>
<dbReference type="HOGENOM" id="CLU_032540_1_1_4"/>
<dbReference type="UniPathway" id="UPA00219"/>
<dbReference type="Proteomes" id="UP000002283">
    <property type="component" value="Chromosome I"/>
</dbReference>
<dbReference type="GO" id="GO:0005737">
    <property type="term" value="C:cytoplasm"/>
    <property type="evidence" value="ECO:0007669"/>
    <property type="project" value="UniProtKB-SubCell"/>
</dbReference>
<dbReference type="GO" id="GO:0005524">
    <property type="term" value="F:ATP binding"/>
    <property type="evidence" value="ECO:0007669"/>
    <property type="project" value="UniProtKB-UniRule"/>
</dbReference>
<dbReference type="GO" id="GO:0008764">
    <property type="term" value="F:UDP-N-acetylmuramoylalanine-D-glutamate ligase activity"/>
    <property type="evidence" value="ECO:0007669"/>
    <property type="project" value="UniProtKB-UniRule"/>
</dbReference>
<dbReference type="GO" id="GO:0051301">
    <property type="term" value="P:cell division"/>
    <property type="evidence" value="ECO:0007669"/>
    <property type="project" value="UniProtKB-KW"/>
</dbReference>
<dbReference type="GO" id="GO:0071555">
    <property type="term" value="P:cell wall organization"/>
    <property type="evidence" value="ECO:0007669"/>
    <property type="project" value="UniProtKB-KW"/>
</dbReference>
<dbReference type="GO" id="GO:0009252">
    <property type="term" value="P:peptidoglycan biosynthetic process"/>
    <property type="evidence" value="ECO:0007669"/>
    <property type="project" value="UniProtKB-UniRule"/>
</dbReference>
<dbReference type="GO" id="GO:0008360">
    <property type="term" value="P:regulation of cell shape"/>
    <property type="evidence" value="ECO:0007669"/>
    <property type="project" value="UniProtKB-KW"/>
</dbReference>
<dbReference type="Gene3D" id="3.90.190.20">
    <property type="entry name" value="Mur ligase, C-terminal domain"/>
    <property type="match status" value="1"/>
</dbReference>
<dbReference type="Gene3D" id="3.40.1190.10">
    <property type="entry name" value="Mur-like, catalytic domain"/>
    <property type="match status" value="1"/>
</dbReference>
<dbReference type="Gene3D" id="3.40.50.720">
    <property type="entry name" value="NAD(P)-binding Rossmann-like Domain"/>
    <property type="match status" value="1"/>
</dbReference>
<dbReference type="HAMAP" id="MF_00639">
    <property type="entry name" value="MurD"/>
    <property type="match status" value="1"/>
</dbReference>
<dbReference type="InterPro" id="IPR036565">
    <property type="entry name" value="Mur-like_cat_sf"/>
</dbReference>
<dbReference type="InterPro" id="IPR004101">
    <property type="entry name" value="Mur_ligase_C"/>
</dbReference>
<dbReference type="InterPro" id="IPR036615">
    <property type="entry name" value="Mur_ligase_C_dom_sf"/>
</dbReference>
<dbReference type="InterPro" id="IPR013221">
    <property type="entry name" value="Mur_ligase_cen"/>
</dbReference>
<dbReference type="InterPro" id="IPR005762">
    <property type="entry name" value="MurD"/>
</dbReference>
<dbReference type="NCBIfam" id="TIGR01087">
    <property type="entry name" value="murD"/>
    <property type="match status" value="1"/>
</dbReference>
<dbReference type="PANTHER" id="PTHR43692">
    <property type="entry name" value="UDP-N-ACETYLMURAMOYLALANINE--D-GLUTAMATE LIGASE"/>
    <property type="match status" value="1"/>
</dbReference>
<dbReference type="PANTHER" id="PTHR43692:SF1">
    <property type="entry name" value="UDP-N-ACETYLMURAMOYLALANINE--D-GLUTAMATE LIGASE"/>
    <property type="match status" value="1"/>
</dbReference>
<dbReference type="Pfam" id="PF02875">
    <property type="entry name" value="Mur_ligase_C"/>
    <property type="match status" value="1"/>
</dbReference>
<dbReference type="Pfam" id="PF08245">
    <property type="entry name" value="Mur_ligase_M"/>
    <property type="match status" value="1"/>
</dbReference>
<dbReference type="Pfam" id="PF21799">
    <property type="entry name" value="MurD-like_N"/>
    <property type="match status" value="1"/>
</dbReference>
<dbReference type="SUPFAM" id="SSF51984">
    <property type="entry name" value="MurCD N-terminal domain"/>
    <property type="match status" value="1"/>
</dbReference>
<dbReference type="SUPFAM" id="SSF53623">
    <property type="entry name" value="MurD-like peptide ligases, catalytic domain"/>
    <property type="match status" value="1"/>
</dbReference>
<dbReference type="SUPFAM" id="SSF53244">
    <property type="entry name" value="MurD-like peptide ligases, peptide-binding domain"/>
    <property type="match status" value="1"/>
</dbReference>
<keyword id="KW-0067">ATP-binding</keyword>
<keyword id="KW-0131">Cell cycle</keyword>
<keyword id="KW-0132">Cell division</keyword>
<keyword id="KW-0133">Cell shape</keyword>
<keyword id="KW-0961">Cell wall biogenesis/degradation</keyword>
<keyword id="KW-0963">Cytoplasm</keyword>
<keyword id="KW-0436">Ligase</keyword>
<keyword id="KW-0547">Nucleotide-binding</keyword>
<keyword id="KW-0573">Peptidoglycan synthesis</keyword>
<sequence>MFGDRQRPMVLVLGLGESGLAIARWCARHGCRLRVADTRETPPNLAALTAAGVDFEFVGGAFSPALVDGGIELVALSPGLSPLAEDLAPLVAAARERGIPVWGELEFFAQALAALGANGYAPKVIAITGTNGKTTTTSLAGLLCERAGKKVAVAGNISPAMLDKLTEAIDAAALPDVWVLELSSFQLDTAHTFAPDAATILNITQDHLDWHGGFAAYAAAKGRVFGPRTVRVLNRDDAEVMRFAPPAAAADAPRAVTFGLNEPAADGDYGLLRENGIAWLVEAIDRDGADAPAAPSRRRKQEAANPPDIALKRLMPADALRIRGLHNAANALAAYALARAIGLPAAPLLHGLREYRGEPHRVEVIATLDGVDYVDDSKGTNVGATVAALDGLAQRAVLIAGGDGKGQDFEPLAAPVARWCRAVMLIGRDAPALREALADTGVPLADHATLEAAVRAASALAQPGDAVLLSPACASLDMFRNYAHRADVFRSAVEDIALEKGTTL</sequence>
<gene>
    <name evidence="1" type="primary">murD</name>
    <name type="ordered locus">BMA10229_A1333</name>
</gene>
<name>MURD_BURM9</name>
<proteinExistence type="inferred from homology"/>
<organism>
    <name type="scientific">Burkholderia mallei (strain NCTC 10229)</name>
    <dbReference type="NCBI Taxonomy" id="412022"/>
    <lineage>
        <taxon>Bacteria</taxon>
        <taxon>Pseudomonadati</taxon>
        <taxon>Pseudomonadota</taxon>
        <taxon>Betaproteobacteria</taxon>
        <taxon>Burkholderiales</taxon>
        <taxon>Burkholderiaceae</taxon>
        <taxon>Burkholderia</taxon>
        <taxon>pseudomallei group</taxon>
    </lineage>
</organism>
<protein>
    <recommendedName>
        <fullName evidence="1">UDP-N-acetylmuramoylalanine--D-glutamate ligase</fullName>
        <ecNumber evidence="1">6.3.2.9</ecNumber>
    </recommendedName>
    <alternativeName>
        <fullName evidence="1">D-glutamic acid-adding enzyme</fullName>
    </alternativeName>
    <alternativeName>
        <fullName evidence="1">UDP-N-acetylmuramoyl-L-alanyl-D-glutamate synthetase</fullName>
    </alternativeName>
</protein>
<feature type="chain" id="PRO_1000056874" description="UDP-N-acetylmuramoylalanine--D-glutamate ligase">
    <location>
        <begin position="1"/>
        <end position="504"/>
    </location>
</feature>
<feature type="binding site" evidence="1">
    <location>
        <begin position="129"/>
        <end position="135"/>
    </location>
    <ligand>
        <name>ATP</name>
        <dbReference type="ChEBI" id="CHEBI:30616"/>
    </ligand>
</feature>
<evidence type="ECO:0000255" key="1">
    <source>
        <dbReference type="HAMAP-Rule" id="MF_00639"/>
    </source>
</evidence>
<reference key="1">
    <citation type="journal article" date="2010" name="Genome Biol. Evol.">
        <title>Continuing evolution of Burkholderia mallei through genome reduction and large-scale rearrangements.</title>
        <authorList>
            <person name="Losada L."/>
            <person name="Ronning C.M."/>
            <person name="DeShazer D."/>
            <person name="Woods D."/>
            <person name="Fedorova N."/>
            <person name="Kim H.S."/>
            <person name="Shabalina S.A."/>
            <person name="Pearson T.R."/>
            <person name="Brinkac L."/>
            <person name="Tan P."/>
            <person name="Nandi T."/>
            <person name="Crabtree J."/>
            <person name="Badger J."/>
            <person name="Beckstrom-Sternberg S."/>
            <person name="Saqib M."/>
            <person name="Schutzer S.E."/>
            <person name="Keim P."/>
            <person name="Nierman W.C."/>
        </authorList>
    </citation>
    <scope>NUCLEOTIDE SEQUENCE [LARGE SCALE GENOMIC DNA]</scope>
    <source>
        <strain>NCTC 10229</strain>
    </source>
</reference>
<accession>A2S5U7</accession>
<comment type="function">
    <text evidence="1">Cell wall formation. Catalyzes the addition of glutamate to the nucleotide precursor UDP-N-acetylmuramoyl-L-alanine (UMA).</text>
</comment>
<comment type="catalytic activity">
    <reaction evidence="1">
        <text>UDP-N-acetyl-alpha-D-muramoyl-L-alanine + D-glutamate + ATP = UDP-N-acetyl-alpha-D-muramoyl-L-alanyl-D-glutamate + ADP + phosphate + H(+)</text>
        <dbReference type="Rhea" id="RHEA:16429"/>
        <dbReference type="ChEBI" id="CHEBI:15378"/>
        <dbReference type="ChEBI" id="CHEBI:29986"/>
        <dbReference type="ChEBI" id="CHEBI:30616"/>
        <dbReference type="ChEBI" id="CHEBI:43474"/>
        <dbReference type="ChEBI" id="CHEBI:83898"/>
        <dbReference type="ChEBI" id="CHEBI:83900"/>
        <dbReference type="ChEBI" id="CHEBI:456216"/>
        <dbReference type="EC" id="6.3.2.9"/>
    </reaction>
</comment>
<comment type="pathway">
    <text evidence="1">Cell wall biogenesis; peptidoglycan biosynthesis.</text>
</comment>
<comment type="subcellular location">
    <subcellularLocation>
        <location evidence="1">Cytoplasm</location>
    </subcellularLocation>
</comment>
<comment type="similarity">
    <text evidence="1">Belongs to the MurCDEF family.</text>
</comment>